<keyword id="KW-0175">Coiled coil</keyword>
<keyword id="KW-0456">Lyase</keyword>
<keyword id="KW-0460">Magnesium</keyword>
<keyword id="KW-0464">Manganese</keyword>
<keyword id="KW-0479">Metal-binding</keyword>
<comment type="function">
    <text evidence="6 7">Involved in the biosynthesis of phenolic sesquiterpenes natural products (Ref.2). Sesquiterpene synthase that catalyzes mainly the formation of (-)-germacrene D and minor amounts of other sesquiterpenes (e.g. bicyclo-germacrene) from farnesyl diphosphate (FPP) (PubMed:20419468, Ref.2). Also triggers moderate amounts formation of myrcene, limonene, terpinolene and linalool in the presence of geranyl diphosphate (GPP) (PubMed:20419468, Ref.2).</text>
</comment>
<comment type="catalytic activity">
    <reaction evidence="6 7">
        <text>(2E,6E)-farnesyl diphosphate = (-)-germacrene D + diphosphate</text>
        <dbReference type="Rhea" id="RHEA:12016"/>
        <dbReference type="ChEBI" id="CHEBI:33019"/>
        <dbReference type="ChEBI" id="CHEBI:49044"/>
        <dbReference type="ChEBI" id="CHEBI:175763"/>
        <dbReference type="EC" id="4.2.3.75"/>
    </reaction>
    <physiologicalReaction direction="left-to-right" evidence="6 7">
        <dbReference type="Rhea" id="RHEA:12017"/>
    </physiologicalReaction>
</comment>
<comment type="cofactor">
    <cofactor evidence="3">
        <name>Mn(2+)</name>
        <dbReference type="ChEBI" id="CHEBI:29035"/>
    </cofactor>
    <cofactor evidence="3">
        <name>Mg(2+)</name>
        <dbReference type="ChEBI" id="CHEBI:18420"/>
    </cofactor>
    <text evidence="3">Binds 3 Mg(2+) or Mn(2+) ions per subunit.</text>
</comment>
<comment type="pathway">
    <text evidence="6 7">Secondary metabolite biosynthesis; terpenoid biosynthesis.</text>
</comment>
<comment type="subunit">
    <text evidence="1">Homodimer.</text>
</comment>
<comment type="tissue specificity">
    <text evidence="6 8">Expressed in peltate glandular trichomes (PubMed:20419468). Present at low levels in flowers, leaves and stems (Ref.3).</text>
</comment>
<comment type="domain">
    <text evidence="4">The Asp-Asp-Xaa-Xaa-Asp/Glu (DDXXD/E) motif is important for the catalytic activity, presumably through binding to Mg(2+).</text>
</comment>
<comment type="similarity">
    <text evidence="10">Belongs to the terpene synthase family.</text>
</comment>
<name>GCDS_ORIVU</name>
<accession>E2E2N8</accession>
<dbReference type="EC" id="4.2.3.75" evidence="6 7"/>
<dbReference type="EMBL" id="GU385976">
    <property type="protein sequence ID" value="ADK73619.1"/>
    <property type="molecule type" value="mRNA"/>
</dbReference>
<dbReference type="SMR" id="E2E2N8"/>
<dbReference type="UniPathway" id="UPA00213"/>
<dbReference type="GO" id="GO:0000287">
    <property type="term" value="F:magnesium ion binding"/>
    <property type="evidence" value="ECO:0007669"/>
    <property type="project" value="InterPro"/>
</dbReference>
<dbReference type="GO" id="GO:0042803">
    <property type="term" value="F:protein homodimerization activity"/>
    <property type="evidence" value="ECO:0000250"/>
    <property type="project" value="UniProtKB"/>
</dbReference>
<dbReference type="GO" id="GO:0010333">
    <property type="term" value="F:terpene synthase activity"/>
    <property type="evidence" value="ECO:0007669"/>
    <property type="project" value="InterPro"/>
</dbReference>
<dbReference type="GO" id="GO:0016102">
    <property type="term" value="P:diterpenoid biosynthetic process"/>
    <property type="evidence" value="ECO:0007669"/>
    <property type="project" value="InterPro"/>
</dbReference>
<dbReference type="CDD" id="cd00684">
    <property type="entry name" value="Terpene_cyclase_plant_C1"/>
    <property type="match status" value="1"/>
</dbReference>
<dbReference type="FunFam" id="1.10.600.10:FF:000007">
    <property type="entry name" value="Isoprene synthase, chloroplastic"/>
    <property type="match status" value="1"/>
</dbReference>
<dbReference type="FunFam" id="1.50.10.130:FF:000001">
    <property type="entry name" value="Isoprene synthase, chloroplastic"/>
    <property type="match status" value="1"/>
</dbReference>
<dbReference type="Gene3D" id="1.10.600.10">
    <property type="entry name" value="Farnesyl Diphosphate Synthase"/>
    <property type="match status" value="1"/>
</dbReference>
<dbReference type="Gene3D" id="1.50.10.130">
    <property type="entry name" value="Terpene synthase, N-terminal domain"/>
    <property type="match status" value="1"/>
</dbReference>
<dbReference type="InterPro" id="IPR008949">
    <property type="entry name" value="Isoprenoid_synthase_dom_sf"/>
</dbReference>
<dbReference type="InterPro" id="IPR034741">
    <property type="entry name" value="Terpene_cyclase-like_1_C"/>
</dbReference>
<dbReference type="InterPro" id="IPR044814">
    <property type="entry name" value="Terpene_cyclase_plant_C1"/>
</dbReference>
<dbReference type="InterPro" id="IPR001906">
    <property type="entry name" value="Terpene_synth_N"/>
</dbReference>
<dbReference type="InterPro" id="IPR036965">
    <property type="entry name" value="Terpene_synth_N_sf"/>
</dbReference>
<dbReference type="InterPro" id="IPR050148">
    <property type="entry name" value="Terpene_synthase-like"/>
</dbReference>
<dbReference type="InterPro" id="IPR005630">
    <property type="entry name" value="Terpene_synthase_metal-bd"/>
</dbReference>
<dbReference type="InterPro" id="IPR008930">
    <property type="entry name" value="Terpenoid_cyclase/PrenylTrfase"/>
</dbReference>
<dbReference type="PANTHER" id="PTHR31225:SF221">
    <property type="entry name" value="(-)-GERMACRENE D SYNTHASE"/>
    <property type="match status" value="1"/>
</dbReference>
<dbReference type="PANTHER" id="PTHR31225">
    <property type="entry name" value="OS04G0344100 PROTEIN-RELATED"/>
    <property type="match status" value="1"/>
</dbReference>
<dbReference type="Pfam" id="PF01397">
    <property type="entry name" value="Terpene_synth"/>
    <property type="match status" value="1"/>
</dbReference>
<dbReference type="Pfam" id="PF03936">
    <property type="entry name" value="Terpene_synth_C"/>
    <property type="match status" value="1"/>
</dbReference>
<dbReference type="SFLD" id="SFLDS00005">
    <property type="entry name" value="Isoprenoid_Synthase_Type_I"/>
    <property type="match status" value="1"/>
</dbReference>
<dbReference type="SFLD" id="SFLDG01019">
    <property type="entry name" value="Terpene_Cyclase_Like_1_C_Termi"/>
    <property type="match status" value="1"/>
</dbReference>
<dbReference type="SUPFAM" id="SSF48239">
    <property type="entry name" value="Terpenoid cyclases/Protein prenyltransferases"/>
    <property type="match status" value="1"/>
</dbReference>
<dbReference type="SUPFAM" id="SSF48576">
    <property type="entry name" value="Terpenoid synthases"/>
    <property type="match status" value="1"/>
</dbReference>
<organism>
    <name type="scientific">Origanum vulgare</name>
    <name type="common">Wild marjoram</name>
    <dbReference type="NCBI Taxonomy" id="39352"/>
    <lineage>
        <taxon>Eukaryota</taxon>
        <taxon>Viridiplantae</taxon>
        <taxon>Streptophyta</taxon>
        <taxon>Embryophyta</taxon>
        <taxon>Tracheophyta</taxon>
        <taxon>Spermatophyta</taxon>
        <taxon>Magnoliopsida</taxon>
        <taxon>eudicotyledons</taxon>
        <taxon>Gunneridae</taxon>
        <taxon>Pentapetalae</taxon>
        <taxon>asterids</taxon>
        <taxon>lamiids</taxon>
        <taxon>Lamiales</taxon>
        <taxon>Lamiaceae</taxon>
        <taxon>Nepetoideae</taxon>
        <taxon>Mentheae</taxon>
        <taxon>Origanum</taxon>
    </lineage>
</organism>
<sequence length="563" mass="65463">MAEICASAAPISTKNTSVEELRRSVTYHPSVWRDHFLSYTNDVTEITAAEKEELEKQKEKVKNLLDQTPNDSTLKIELIDAIQRLGFGYHFEEVIDESLGEVYDRYEMPSGKDDEDEIRVRSLRFRLLRQQGYRVPCDVFEKLLDDKGNFKDSLITDVEGLLSLYEASNYGINGEEIMDKALKFSSSHLEGSIHKMPTSLSRRVKEALDMPISKTLTRLGARKFISLYQEDESHNELLLKFAKLDFNIVQKMHQRELHHITRWWEGLEFGKKLPFARDRVVECFFWILGVYFEPKYEIARRFLTKVISMTSILDDIYDVYGSLDELRRLTHAIQRWDISVGDELPPYMRICYEALLGVYSEMEDEMAKKGQSYRLLYARQEMIKLVMAYMVEAEWCFSKYFPTMEEYMKQALVSGAYMMLSTTSLVGMEDLNITKHDFDWITSEPPMLRAASVICRLMDDMVGHGIEQKIISVDCYMRENGCSKEEACREFWNRVKKAWKCMNEECLEPRAASMAILARVLNLARVINLLYVGEDAYGSSSTKTKNFIKSVLVDPIHSIEYHI</sequence>
<evidence type="ECO:0000250" key="1">
    <source>
        <dbReference type="UniProtKB" id="A0A0M3Q1Q3"/>
    </source>
</evidence>
<evidence type="ECO:0000250" key="2">
    <source>
        <dbReference type="UniProtKB" id="A0A1C9J6A7"/>
    </source>
</evidence>
<evidence type="ECO:0000250" key="3">
    <source>
        <dbReference type="UniProtKB" id="E2E2P0"/>
    </source>
</evidence>
<evidence type="ECO:0000250" key="4">
    <source>
        <dbReference type="UniProtKB" id="Q9X839"/>
    </source>
</evidence>
<evidence type="ECO:0000255" key="5"/>
<evidence type="ECO:0000269" key="6">
    <source>
    </source>
</evidence>
<evidence type="ECO:0000269" key="7">
    <source ref="2"/>
</evidence>
<evidence type="ECO:0000269" key="8">
    <source ref="3"/>
</evidence>
<evidence type="ECO:0000303" key="9">
    <source>
    </source>
</evidence>
<evidence type="ECO:0000305" key="10"/>
<proteinExistence type="evidence at protein level"/>
<reference key="1">
    <citation type="journal article" date="2010" name="Plant Mol. Biol.">
        <title>Terpene synthases of oregano (Origanum vulgare L.) and their roles in the pathway and regulation of terpene biosynthesis.</title>
        <authorList>
            <person name="Crocoll C."/>
            <person name="Asbach J."/>
            <person name="Novak J."/>
            <person name="Gershenzon J."/>
            <person name="Degenhardt J."/>
        </authorList>
    </citation>
    <scope>NUCLEOTIDE SEQUENCE [MRNA]</scope>
    <scope>FUNCTION</scope>
    <scope>CATALYTIC ACTIVITY</scope>
    <scope>PATHWAY</scope>
    <scope>TISSUE SPECIFICITY</scope>
    <source>
        <strain>cv. d06-01</strain>
        <tissue>Trichome gland</tissue>
    </source>
</reference>
<reference key="2">
    <citation type="thesis" date="2011" institute="Friedrich Schiller University of Jena" country="Germany">
        <title>Biosynthesis of the phenolic monoterpenes, thymol and carvacrol, by terpene synthases and cytochrome P450s in oregano and thyme.</title>
        <authorList>
            <person name="Crocoll C."/>
        </authorList>
    </citation>
    <scope>FUNCTION</scope>
    <scope>CATALYTIC ACTIVITY</scope>
    <scope>PATHWAY</scope>
</reference>
<reference key="3">
    <citation type="journal article" date="2018" name="Ind. Crops Prod.">
        <title>Divergence in tissue-specific expression patterns of genes associated with the terpenoid biosynthesis in two oregano species Origanum vulgare L., and Origanum majorana.</title>
        <authorList>
            <person name="Jan S."/>
            <person name="Mir J.I."/>
            <person name="Shafi W."/>
            <person name="Faktoo S.Z."/>
            <person name="Singh D.B."/>
            <person name="Wijaya L."/>
            <person name="Alyemeni M.N."/>
            <person name="Ahmad P."/>
        </authorList>
    </citation>
    <scope>TISSUE SPECIFICITY</scope>
</reference>
<protein>
    <recommendedName>
        <fullName evidence="9">(-)-germacrene D synthase</fullName>
        <ecNumber evidence="6 7">4.2.3.75</ecNumber>
    </recommendedName>
    <alternativeName>
        <fullName evidence="9">Terpene synthase 3</fullName>
        <shortName evidence="9">OvTPS3</shortName>
    </alternativeName>
</protein>
<feature type="chain" id="PRO_0000453318" description="(-)-germacrene D synthase">
    <location>
        <begin position="1"/>
        <end position="563"/>
    </location>
</feature>
<feature type="region of interest" description="Homodimerization" evidence="1">
    <location>
        <begin position="320"/>
        <end position="326"/>
    </location>
</feature>
<feature type="region of interest" description="Homodimerization" evidence="1">
    <location>
        <begin position="392"/>
        <end position="429"/>
    </location>
</feature>
<feature type="coiled-coil region" evidence="5">
    <location>
        <begin position="44"/>
        <end position="71"/>
    </location>
</feature>
<feature type="short sequence motif" description="DDXXD motif" evidence="4">
    <location>
        <begin position="314"/>
        <end position="318"/>
    </location>
</feature>
<feature type="binding site" evidence="2">
    <location>
        <position position="314"/>
    </location>
    <ligand>
        <name>Mn(2+)</name>
        <dbReference type="ChEBI" id="CHEBI:29035"/>
        <label>1</label>
    </ligand>
</feature>
<feature type="binding site" evidence="2">
    <location>
        <position position="314"/>
    </location>
    <ligand>
        <name>Mn(2+)</name>
        <dbReference type="ChEBI" id="CHEBI:29035"/>
        <label>2</label>
    </ligand>
</feature>
<feature type="binding site" evidence="2">
    <location>
        <position position="318"/>
    </location>
    <ligand>
        <name>Mn(2+)</name>
        <dbReference type="ChEBI" id="CHEBI:29035"/>
        <label>1</label>
    </ligand>
</feature>
<feature type="binding site" evidence="2">
    <location>
        <position position="318"/>
    </location>
    <ligand>
        <name>Mn(2+)</name>
        <dbReference type="ChEBI" id="CHEBI:29035"/>
        <label>2</label>
    </ligand>
</feature>
<feature type="binding site" evidence="2">
    <location>
        <position position="459"/>
    </location>
    <ligand>
        <name>Mn(2+)</name>
        <dbReference type="ChEBI" id="CHEBI:29035"/>
        <label>3</label>
    </ligand>
</feature>
<feature type="binding site" evidence="2">
    <location>
        <position position="467"/>
    </location>
    <ligand>
        <name>Mn(2+)</name>
        <dbReference type="ChEBI" id="CHEBI:29035"/>
        <label>3</label>
    </ligand>
</feature>
<gene>
    <name evidence="9" type="primary">TPS3</name>
</gene>